<accession>A5CV85</accession>
<proteinExistence type="inferred from homology"/>
<reference key="1">
    <citation type="journal article" date="2008" name="J. Bacteriol.">
        <title>The genome sequence of the tomato-pathogenic actinomycete Clavibacter michiganensis subsp. michiganensis NCPPB382 reveals a large island involved in pathogenicity.</title>
        <authorList>
            <person name="Gartemann K.-H."/>
            <person name="Abt B."/>
            <person name="Bekel T."/>
            <person name="Burger A."/>
            <person name="Engemann J."/>
            <person name="Fluegel M."/>
            <person name="Gaigalat L."/>
            <person name="Goesmann A."/>
            <person name="Graefen I."/>
            <person name="Kalinowski J."/>
            <person name="Kaup O."/>
            <person name="Kirchner O."/>
            <person name="Krause L."/>
            <person name="Linke B."/>
            <person name="McHardy A."/>
            <person name="Meyer F."/>
            <person name="Pohle S."/>
            <person name="Rueckert C."/>
            <person name="Schneiker S."/>
            <person name="Zellermann E.-M."/>
            <person name="Puehler A."/>
            <person name="Eichenlaub R."/>
            <person name="Kaiser O."/>
            <person name="Bartels D."/>
        </authorList>
    </citation>
    <scope>NUCLEOTIDE SEQUENCE [LARGE SCALE GENOMIC DNA]</scope>
    <source>
        <strain>NCPPB 382</strain>
    </source>
</reference>
<comment type="similarity">
    <text evidence="1">Belongs to the bacterial ribosomal protein bL28 family.</text>
</comment>
<organism>
    <name type="scientific">Clavibacter michiganensis subsp. michiganensis (strain NCPPB 382)</name>
    <dbReference type="NCBI Taxonomy" id="443906"/>
    <lineage>
        <taxon>Bacteria</taxon>
        <taxon>Bacillati</taxon>
        <taxon>Actinomycetota</taxon>
        <taxon>Actinomycetes</taxon>
        <taxon>Micrococcales</taxon>
        <taxon>Microbacteriaceae</taxon>
        <taxon>Clavibacter</taxon>
    </lineage>
</organism>
<name>RL28_CLAM3</name>
<protein>
    <recommendedName>
        <fullName evidence="1">Large ribosomal subunit protein bL28</fullName>
    </recommendedName>
    <alternativeName>
        <fullName evidence="2">50S ribosomal protein L28</fullName>
    </alternativeName>
</protein>
<sequence>MAATCQVTGAVPGFGHNISHSHRRTKRRFDPNVQKKTYYVPSLRRNVKLTLSAKGIKVIDARGIESVVKDILARGVKI</sequence>
<evidence type="ECO:0000255" key="1">
    <source>
        <dbReference type="HAMAP-Rule" id="MF_00373"/>
    </source>
</evidence>
<evidence type="ECO:0000305" key="2"/>
<feature type="chain" id="PRO_1000007210" description="Large ribosomal subunit protein bL28">
    <location>
        <begin position="1"/>
        <end position="78"/>
    </location>
</feature>
<gene>
    <name evidence="1" type="primary">rpmB</name>
    <name type="ordered locus">CMM_2937</name>
</gene>
<dbReference type="EMBL" id="AM711867">
    <property type="protein sequence ID" value="CAN03024.1"/>
    <property type="molecule type" value="Genomic_DNA"/>
</dbReference>
<dbReference type="RefSeq" id="WP_012039624.1">
    <property type="nucleotide sequence ID" value="NC_009480.1"/>
</dbReference>
<dbReference type="SMR" id="A5CV85"/>
<dbReference type="GeneID" id="92948955"/>
<dbReference type="KEGG" id="cmi:CMM_2937"/>
<dbReference type="eggNOG" id="COG0227">
    <property type="taxonomic scope" value="Bacteria"/>
</dbReference>
<dbReference type="HOGENOM" id="CLU_064548_3_1_11"/>
<dbReference type="OrthoDB" id="9805609at2"/>
<dbReference type="Proteomes" id="UP000001564">
    <property type="component" value="Chromosome"/>
</dbReference>
<dbReference type="GO" id="GO:1990904">
    <property type="term" value="C:ribonucleoprotein complex"/>
    <property type="evidence" value="ECO:0007669"/>
    <property type="project" value="UniProtKB-KW"/>
</dbReference>
<dbReference type="GO" id="GO:0005840">
    <property type="term" value="C:ribosome"/>
    <property type="evidence" value="ECO:0007669"/>
    <property type="project" value="UniProtKB-KW"/>
</dbReference>
<dbReference type="GO" id="GO:0003735">
    <property type="term" value="F:structural constituent of ribosome"/>
    <property type="evidence" value="ECO:0007669"/>
    <property type="project" value="InterPro"/>
</dbReference>
<dbReference type="GO" id="GO:0006412">
    <property type="term" value="P:translation"/>
    <property type="evidence" value="ECO:0007669"/>
    <property type="project" value="UniProtKB-UniRule"/>
</dbReference>
<dbReference type="FunFam" id="2.30.170.40:FF:000001">
    <property type="entry name" value="50S ribosomal protein L28"/>
    <property type="match status" value="1"/>
</dbReference>
<dbReference type="Gene3D" id="2.30.170.40">
    <property type="entry name" value="Ribosomal protein L28/L24"/>
    <property type="match status" value="1"/>
</dbReference>
<dbReference type="HAMAP" id="MF_00373">
    <property type="entry name" value="Ribosomal_bL28"/>
    <property type="match status" value="1"/>
</dbReference>
<dbReference type="InterPro" id="IPR026569">
    <property type="entry name" value="Ribosomal_bL28"/>
</dbReference>
<dbReference type="InterPro" id="IPR034704">
    <property type="entry name" value="Ribosomal_bL28/bL31-like_sf"/>
</dbReference>
<dbReference type="InterPro" id="IPR001383">
    <property type="entry name" value="Ribosomal_bL28_bact-type"/>
</dbReference>
<dbReference type="InterPro" id="IPR037147">
    <property type="entry name" value="Ribosomal_bL28_sf"/>
</dbReference>
<dbReference type="NCBIfam" id="TIGR00009">
    <property type="entry name" value="L28"/>
    <property type="match status" value="1"/>
</dbReference>
<dbReference type="PANTHER" id="PTHR13528">
    <property type="entry name" value="39S RIBOSOMAL PROTEIN L28, MITOCHONDRIAL"/>
    <property type="match status" value="1"/>
</dbReference>
<dbReference type="PANTHER" id="PTHR13528:SF2">
    <property type="entry name" value="LARGE RIBOSOMAL SUBUNIT PROTEIN BL28M"/>
    <property type="match status" value="1"/>
</dbReference>
<dbReference type="Pfam" id="PF00830">
    <property type="entry name" value="Ribosomal_L28"/>
    <property type="match status" value="1"/>
</dbReference>
<dbReference type="SUPFAM" id="SSF143800">
    <property type="entry name" value="L28p-like"/>
    <property type="match status" value="1"/>
</dbReference>
<keyword id="KW-0687">Ribonucleoprotein</keyword>
<keyword id="KW-0689">Ribosomal protein</keyword>